<keyword id="KW-0963">Cytoplasm</keyword>
<keyword id="KW-0456">Lyase</keyword>
<keyword id="KW-0670">Pyruvate</keyword>
<keyword id="KW-1185">Reference proteome</keyword>
<keyword id="KW-0831">Ubiquinone biosynthesis</keyword>
<reference key="1">
    <citation type="journal article" date="2000" name="Nature">
        <title>DNA sequence of both chromosomes of the cholera pathogen Vibrio cholerae.</title>
        <authorList>
            <person name="Heidelberg J.F."/>
            <person name="Eisen J.A."/>
            <person name="Nelson W.C."/>
            <person name="Clayton R.A."/>
            <person name="Gwinn M.L."/>
            <person name="Dodson R.J."/>
            <person name="Haft D.H."/>
            <person name="Hickey E.K."/>
            <person name="Peterson J.D."/>
            <person name="Umayam L.A."/>
            <person name="Gill S.R."/>
            <person name="Nelson K.E."/>
            <person name="Read T.D."/>
            <person name="Tettelin H."/>
            <person name="Richardson D.L."/>
            <person name="Ermolaeva M.D."/>
            <person name="Vamathevan J.J."/>
            <person name="Bass S."/>
            <person name="Qin H."/>
            <person name="Dragoi I."/>
            <person name="Sellers P."/>
            <person name="McDonald L.A."/>
            <person name="Utterback T.R."/>
            <person name="Fleischmann R.D."/>
            <person name="Nierman W.C."/>
            <person name="White O."/>
            <person name="Salzberg S.L."/>
            <person name="Smith H.O."/>
            <person name="Colwell R.R."/>
            <person name="Mekalanos J.J."/>
            <person name="Venter J.C."/>
            <person name="Fraser C.M."/>
        </authorList>
    </citation>
    <scope>NUCLEOTIDE SEQUENCE [LARGE SCALE GENOMIC DNA]</scope>
    <source>
        <strain>ATCC 39315 / El Tor Inaba N16961</strain>
    </source>
</reference>
<sequence length="179" mass="20622">MNQLTSLYLAALNRVTWQQPDDIEFPAPLAQQWLLEQGSLSRRMATQCEHLTVDLLSNQIMLADTLSYDETQLLASEEYLLRQVIIYGDQQPWVFGHTLIPRSSMHNQPFDFTQQGKIPLGLTVFSADNVKRDALQVGWVETELGRLLARRSRLWMNNKPMLVTELFLATSPIYSKERV</sequence>
<organism>
    <name type="scientific">Vibrio cholerae serotype O1 (strain ATCC 39315 / El Tor Inaba N16961)</name>
    <dbReference type="NCBI Taxonomy" id="243277"/>
    <lineage>
        <taxon>Bacteria</taxon>
        <taxon>Pseudomonadati</taxon>
        <taxon>Pseudomonadota</taxon>
        <taxon>Gammaproteobacteria</taxon>
        <taxon>Vibrionales</taxon>
        <taxon>Vibrionaceae</taxon>
        <taxon>Vibrio</taxon>
    </lineage>
</organism>
<accession>Q9KVP6</accession>
<feature type="chain" id="PRO_0000240580" description="Probable chorismate pyruvate-lyase">
    <location>
        <begin position="1"/>
        <end position="179"/>
    </location>
</feature>
<feature type="binding site" evidence="1">
    <location>
        <position position="82"/>
    </location>
    <ligand>
        <name>substrate</name>
    </ligand>
</feature>
<feature type="binding site" evidence="1">
    <location>
        <position position="120"/>
    </location>
    <ligand>
        <name>substrate</name>
    </ligand>
</feature>
<feature type="binding site" evidence="1">
    <location>
        <position position="165"/>
    </location>
    <ligand>
        <name>substrate</name>
    </ligand>
</feature>
<name>UBIC_VIBCH</name>
<protein>
    <recommendedName>
        <fullName evidence="1">Probable chorismate pyruvate-lyase</fullName>
        <shortName evidence="1">CL</shortName>
        <shortName evidence="1">CPL</shortName>
        <ecNumber evidence="1">4.1.3.40</ecNumber>
    </recommendedName>
</protein>
<comment type="function">
    <text evidence="1">Removes the pyruvyl group from chorismate, with concomitant aromatization of the ring, to provide 4-hydroxybenzoate (4HB) for the ubiquinone pathway.</text>
</comment>
<comment type="catalytic activity">
    <reaction evidence="1">
        <text>chorismate = 4-hydroxybenzoate + pyruvate</text>
        <dbReference type="Rhea" id="RHEA:16505"/>
        <dbReference type="ChEBI" id="CHEBI:15361"/>
        <dbReference type="ChEBI" id="CHEBI:17879"/>
        <dbReference type="ChEBI" id="CHEBI:29748"/>
        <dbReference type="EC" id="4.1.3.40"/>
    </reaction>
</comment>
<comment type="pathway">
    <text evidence="1">Cofactor biosynthesis; ubiquinone biosynthesis.</text>
</comment>
<comment type="subcellular location">
    <subcellularLocation>
        <location evidence="1">Cytoplasm</location>
    </subcellularLocation>
</comment>
<comment type="similarity">
    <text evidence="1">Belongs to the UbiC family.</text>
</comment>
<comment type="sequence caution" evidence="2">
    <conflict type="erroneous initiation">
        <sequence resource="EMBL-CDS" id="AAF93273"/>
    </conflict>
    <text>Extended N-terminus.</text>
</comment>
<dbReference type="EC" id="4.1.3.40" evidence="1"/>
<dbReference type="EMBL" id="AE003852">
    <property type="protein sequence ID" value="AAF93273.1"/>
    <property type="status" value="ALT_INIT"/>
    <property type="molecule type" value="Genomic_DNA"/>
</dbReference>
<dbReference type="PIR" id="D82365">
    <property type="entry name" value="D82365"/>
</dbReference>
<dbReference type="RefSeq" id="NP_229754.1">
    <property type="nucleotide sequence ID" value="NC_002505.1"/>
</dbReference>
<dbReference type="RefSeq" id="WP_001072873.1">
    <property type="nucleotide sequence ID" value="NZ_LT906614.1"/>
</dbReference>
<dbReference type="SMR" id="Q9KVP6"/>
<dbReference type="STRING" id="243277.VC_0095"/>
<dbReference type="DNASU" id="2615822"/>
<dbReference type="EnsemblBacteria" id="AAF93273">
    <property type="protein sequence ID" value="AAF93273"/>
    <property type="gene ID" value="VC_0095"/>
</dbReference>
<dbReference type="KEGG" id="vch:VC_0095"/>
<dbReference type="PATRIC" id="fig|243277.26.peg.92"/>
<dbReference type="eggNOG" id="COG3161">
    <property type="taxonomic scope" value="Bacteria"/>
</dbReference>
<dbReference type="HOGENOM" id="CLU_096824_1_1_6"/>
<dbReference type="UniPathway" id="UPA00232"/>
<dbReference type="Proteomes" id="UP000000584">
    <property type="component" value="Chromosome 1"/>
</dbReference>
<dbReference type="GO" id="GO:0005829">
    <property type="term" value="C:cytosol"/>
    <property type="evidence" value="ECO:0000318"/>
    <property type="project" value="GO_Central"/>
</dbReference>
<dbReference type="GO" id="GO:0008813">
    <property type="term" value="F:chorismate lyase activity"/>
    <property type="evidence" value="ECO:0000318"/>
    <property type="project" value="GO_Central"/>
</dbReference>
<dbReference type="GO" id="GO:0042866">
    <property type="term" value="P:pyruvate biosynthetic process"/>
    <property type="evidence" value="ECO:0007669"/>
    <property type="project" value="UniProtKB-UniRule"/>
</dbReference>
<dbReference type="GO" id="GO:0006744">
    <property type="term" value="P:ubiquinone biosynthetic process"/>
    <property type="evidence" value="ECO:0000318"/>
    <property type="project" value="GO_Central"/>
</dbReference>
<dbReference type="Gene3D" id="3.40.1410.10">
    <property type="entry name" value="Chorismate lyase-like"/>
    <property type="match status" value="1"/>
</dbReference>
<dbReference type="HAMAP" id="MF_01632">
    <property type="entry name" value="UbiC"/>
    <property type="match status" value="1"/>
</dbReference>
<dbReference type="InterPro" id="IPR007440">
    <property type="entry name" value="Chorismate--pyruvate_lyase"/>
</dbReference>
<dbReference type="InterPro" id="IPR028978">
    <property type="entry name" value="Chorismate_lyase_/UTRA_dom_sf"/>
</dbReference>
<dbReference type="PANTHER" id="PTHR38683">
    <property type="entry name" value="CHORISMATE PYRUVATE-LYASE"/>
    <property type="match status" value="1"/>
</dbReference>
<dbReference type="PANTHER" id="PTHR38683:SF1">
    <property type="entry name" value="CHORISMATE PYRUVATE-LYASE"/>
    <property type="match status" value="1"/>
</dbReference>
<dbReference type="Pfam" id="PF04345">
    <property type="entry name" value="Chor_lyase"/>
    <property type="match status" value="1"/>
</dbReference>
<dbReference type="SUPFAM" id="SSF64288">
    <property type="entry name" value="Chorismate lyase-like"/>
    <property type="match status" value="1"/>
</dbReference>
<gene>
    <name evidence="1" type="primary">ubiC</name>
    <name type="ordered locus">VC_0095</name>
</gene>
<evidence type="ECO:0000255" key="1">
    <source>
        <dbReference type="HAMAP-Rule" id="MF_01632"/>
    </source>
</evidence>
<evidence type="ECO:0000305" key="2"/>
<proteinExistence type="inferred from homology"/>